<gene>
    <name evidence="1" type="primary">hisB</name>
    <name type="ordered locus">Daro_3382</name>
</gene>
<reference key="1">
    <citation type="journal article" date="2009" name="BMC Genomics">
        <title>Metabolic analysis of the soil microbe Dechloromonas aromatica str. RCB: indications of a surprisingly complex life-style and cryptic anaerobic pathways for aromatic degradation.</title>
        <authorList>
            <person name="Salinero K.K."/>
            <person name="Keller K."/>
            <person name="Feil W.S."/>
            <person name="Feil H."/>
            <person name="Trong S."/>
            <person name="Di Bartolo G."/>
            <person name="Lapidus A."/>
        </authorList>
    </citation>
    <scope>NUCLEOTIDE SEQUENCE [LARGE SCALE GENOMIC DNA]</scope>
    <source>
        <strain>RCB</strain>
    </source>
</reference>
<evidence type="ECO:0000255" key="1">
    <source>
        <dbReference type="HAMAP-Rule" id="MF_00076"/>
    </source>
</evidence>
<accession>Q47AM0</accession>
<organism>
    <name type="scientific">Dechloromonas aromatica (strain RCB)</name>
    <dbReference type="NCBI Taxonomy" id="159087"/>
    <lineage>
        <taxon>Bacteria</taxon>
        <taxon>Pseudomonadati</taxon>
        <taxon>Pseudomonadota</taxon>
        <taxon>Betaproteobacteria</taxon>
        <taxon>Rhodocyclales</taxon>
        <taxon>Azonexaceae</taxon>
        <taxon>Dechloromonas</taxon>
    </lineage>
</organism>
<sequence>MRQAEITRNTLETQITVRLNLDGTGQGKYATGVPFLDHMLDQIARHGLIDLDIEAKGDLHIDAHHTVEDIGITFGQALAKAWGDKKGLTRYGHSYVPLDEALSRVVIDLSGRPGLELHVEFTRAVIGTFDVDLVGEFFHGLVNHAGMTLHIDNLRGKNAHHQAETIFKAFGRALRMAVTPDPRMAGTMPSTKGSL</sequence>
<keyword id="KW-0028">Amino-acid biosynthesis</keyword>
<keyword id="KW-0963">Cytoplasm</keyword>
<keyword id="KW-0368">Histidine biosynthesis</keyword>
<keyword id="KW-0456">Lyase</keyword>
<feature type="chain" id="PRO_1000010274" description="Imidazoleglycerol-phosphate dehydratase">
    <location>
        <begin position="1"/>
        <end position="195"/>
    </location>
</feature>
<proteinExistence type="inferred from homology"/>
<protein>
    <recommendedName>
        <fullName evidence="1">Imidazoleglycerol-phosphate dehydratase</fullName>
        <shortName evidence="1">IGPD</shortName>
        <ecNumber evidence="1">4.2.1.19</ecNumber>
    </recommendedName>
</protein>
<name>HIS7_DECAR</name>
<comment type="catalytic activity">
    <reaction evidence="1">
        <text>D-erythro-1-(imidazol-4-yl)glycerol 3-phosphate = 3-(imidazol-4-yl)-2-oxopropyl phosphate + H2O</text>
        <dbReference type="Rhea" id="RHEA:11040"/>
        <dbReference type="ChEBI" id="CHEBI:15377"/>
        <dbReference type="ChEBI" id="CHEBI:57766"/>
        <dbReference type="ChEBI" id="CHEBI:58278"/>
        <dbReference type="EC" id="4.2.1.19"/>
    </reaction>
</comment>
<comment type="pathway">
    <text evidence="1">Amino-acid biosynthesis; L-histidine biosynthesis; L-histidine from 5-phospho-alpha-D-ribose 1-diphosphate: step 6/9.</text>
</comment>
<comment type="subcellular location">
    <subcellularLocation>
        <location evidence="1">Cytoplasm</location>
    </subcellularLocation>
</comment>
<comment type="similarity">
    <text evidence="1">Belongs to the imidazoleglycerol-phosphate dehydratase family.</text>
</comment>
<dbReference type="EC" id="4.2.1.19" evidence="1"/>
<dbReference type="EMBL" id="CP000089">
    <property type="protein sequence ID" value="AAZ48111.1"/>
    <property type="molecule type" value="Genomic_DNA"/>
</dbReference>
<dbReference type="SMR" id="Q47AM0"/>
<dbReference type="STRING" id="159087.Daro_3382"/>
<dbReference type="KEGG" id="dar:Daro_3382"/>
<dbReference type="eggNOG" id="COG0131">
    <property type="taxonomic scope" value="Bacteria"/>
</dbReference>
<dbReference type="HOGENOM" id="CLU_044308_2_0_4"/>
<dbReference type="OrthoDB" id="9790411at2"/>
<dbReference type="UniPathway" id="UPA00031">
    <property type="reaction ID" value="UER00011"/>
</dbReference>
<dbReference type="GO" id="GO:0005737">
    <property type="term" value="C:cytoplasm"/>
    <property type="evidence" value="ECO:0007669"/>
    <property type="project" value="UniProtKB-SubCell"/>
</dbReference>
<dbReference type="GO" id="GO:0004424">
    <property type="term" value="F:imidazoleglycerol-phosphate dehydratase activity"/>
    <property type="evidence" value="ECO:0007669"/>
    <property type="project" value="UniProtKB-UniRule"/>
</dbReference>
<dbReference type="GO" id="GO:0000105">
    <property type="term" value="P:L-histidine biosynthetic process"/>
    <property type="evidence" value="ECO:0007669"/>
    <property type="project" value="UniProtKB-UniRule"/>
</dbReference>
<dbReference type="CDD" id="cd07914">
    <property type="entry name" value="IGPD"/>
    <property type="match status" value="1"/>
</dbReference>
<dbReference type="FunFam" id="3.30.230.40:FF:000002">
    <property type="entry name" value="Imidazoleglycerol-phosphate dehydratase"/>
    <property type="match status" value="1"/>
</dbReference>
<dbReference type="FunFam" id="3.30.230.40:FF:000003">
    <property type="entry name" value="Imidazoleglycerol-phosphate dehydratase HisB"/>
    <property type="match status" value="1"/>
</dbReference>
<dbReference type="Gene3D" id="3.30.230.40">
    <property type="entry name" value="Imidazole glycerol phosphate dehydratase, domain 1"/>
    <property type="match status" value="2"/>
</dbReference>
<dbReference type="HAMAP" id="MF_00076">
    <property type="entry name" value="HisB"/>
    <property type="match status" value="1"/>
</dbReference>
<dbReference type="InterPro" id="IPR038494">
    <property type="entry name" value="IGPD_sf"/>
</dbReference>
<dbReference type="InterPro" id="IPR000807">
    <property type="entry name" value="ImidazoleglycerolP_deHydtase"/>
</dbReference>
<dbReference type="InterPro" id="IPR020565">
    <property type="entry name" value="ImidazoleglycerP_deHydtase_CS"/>
</dbReference>
<dbReference type="InterPro" id="IPR020568">
    <property type="entry name" value="Ribosomal_Su5_D2-typ_SF"/>
</dbReference>
<dbReference type="NCBIfam" id="NF002106">
    <property type="entry name" value="PRK00951.1-1"/>
    <property type="match status" value="1"/>
</dbReference>
<dbReference type="NCBIfam" id="NF002109">
    <property type="entry name" value="PRK00951.1-5"/>
    <property type="match status" value="1"/>
</dbReference>
<dbReference type="NCBIfam" id="NF002111">
    <property type="entry name" value="PRK00951.2-1"/>
    <property type="match status" value="1"/>
</dbReference>
<dbReference type="NCBIfam" id="NF002114">
    <property type="entry name" value="PRK00951.2-4"/>
    <property type="match status" value="1"/>
</dbReference>
<dbReference type="PANTHER" id="PTHR23133:SF2">
    <property type="entry name" value="IMIDAZOLEGLYCEROL-PHOSPHATE DEHYDRATASE"/>
    <property type="match status" value="1"/>
</dbReference>
<dbReference type="PANTHER" id="PTHR23133">
    <property type="entry name" value="IMIDAZOLEGLYCEROL-PHOSPHATE DEHYDRATASE HIS7"/>
    <property type="match status" value="1"/>
</dbReference>
<dbReference type="Pfam" id="PF00475">
    <property type="entry name" value="IGPD"/>
    <property type="match status" value="1"/>
</dbReference>
<dbReference type="SUPFAM" id="SSF54211">
    <property type="entry name" value="Ribosomal protein S5 domain 2-like"/>
    <property type="match status" value="2"/>
</dbReference>
<dbReference type="PROSITE" id="PS00954">
    <property type="entry name" value="IGP_DEHYDRATASE_1"/>
    <property type="match status" value="1"/>
</dbReference>
<dbReference type="PROSITE" id="PS00955">
    <property type="entry name" value="IGP_DEHYDRATASE_2"/>
    <property type="match status" value="1"/>
</dbReference>